<comment type="function">
    <text>Probable ATPase of unknown function. Its presence in a non-photosynthetic plant (Epifagus virginiana) and experiments in tobacco indicate that it has an essential function which is probably not related to photosynthesis.</text>
</comment>
<comment type="subcellular location">
    <subcellularLocation>
        <location evidence="1">Plastid</location>
        <location evidence="1">Chloroplast stroma</location>
    </subcellularLocation>
</comment>
<comment type="similarity">
    <text evidence="3">Belongs to the Ycf2 family.</text>
</comment>
<comment type="caution">
    <text evidence="3">There are two genes for this protein in the chloroplast inverted repeat; while they are usually identical, in this organism they are not. The other copy is AC Q8S8U1.</text>
</comment>
<evidence type="ECO:0000250" key="1"/>
<evidence type="ECO:0000255" key="2"/>
<evidence type="ECO:0000305" key="3"/>
<organism>
    <name type="scientific">Atropa belladonna</name>
    <name type="common">Belladonna</name>
    <name type="synonym">Deadly nightshade</name>
    <dbReference type="NCBI Taxonomy" id="33113"/>
    <lineage>
        <taxon>Eukaryota</taxon>
        <taxon>Viridiplantae</taxon>
        <taxon>Streptophyta</taxon>
        <taxon>Embryophyta</taxon>
        <taxon>Tracheophyta</taxon>
        <taxon>Spermatophyta</taxon>
        <taxon>Magnoliopsida</taxon>
        <taxon>eudicotyledons</taxon>
        <taxon>Gunneridae</taxon>
        <taxon>Pentapetalae</taxon>
        <taxon>asterids</taxon>
        <taxon>lamiids</taxon>
        <taxon>Solanales</taxon>
        <taxon>Solanaceae</taxon>
        <taxon>Solanoideae</taxon>
        <taxon>Hyoscyameae</taxon>
        <taxon>Atropa</taxon>
    </lineage>
</organism>
<reference key="1">
    <citation type="journal article" date="2002" name="Mol. Biol. Evol.">
        <title>The plastid chromosome of Atropa belladonna and its comparison with that of Nicotiana tabacum: the role of RNA editing in generating divergence in the process of plant speciation.</title>
        <authorList>
            <person name="Schmitz-Linneweber C."/>
            <person name="Regel R."/>
            <person name="Du T.G."/>
            <person name="Hupfer H."/>
            <person name="Herrmann R.G."/>
            <person name="Maier R.M."/>
        </authorList>
    </citation>
    <scope>NUCLEOTIDE SEQUENCE [LARGE SCALE GENOMIC DNA]</scope>
    <source>
        <strain>cv. Ab5p(kan)</strain>
    </source>
</reference>
<dbReference type="EMBL" id="AJ316582">
    <property type="protein sequence ID" value="CAC88087.1"/>
    <property type="molecule type" value="Genomic_DNA"/>
</dbReference>
<dbReference type="GO" id="GO:0009570">
    <property type="term" value="C:chloroplast stroma"/>
    <property type="evidence" value="ECO:0007669"/>
    <property type="project" value="UniProtKB-SubCell"/>
</dbReference>
<dbReference type="GO" id="GO:0005524">
    <property type="term" value="F:ATP binding"/>
    <property type="evidence" value="ECO:0007669"/>
    <property type="project" value="UniProtKB-KW"/>
</dbReference>
<dbReference type="GO" id="GO:0016887">
    <property type="term" value="F:ATP hydrolysis activity"/>
    <property type="evidence" value="ECO:0007669"/>
    <property type="project" value="InterPro"/>
</dbReference>
<dbReference type="CDD" id="cd19505">
    <property type="entry name" value="RecA-like_Ycf2"/>
    <property type="match status" value="1"/>
</dbReference>
<dbReference type="Gene3D" id="3.40.50.300">
    <property type="entry name" value="P-loop containing nucleotide triphosphate hydrolases"/>
    <property type="match status" value="1"/>
</dbReference>
<dbReference type="HAMAP" id="MF_01330">
    <property type="entry name" value="Ycf2"/>
    <property type="match status" value="1"/>
</dbReference>
<dbReference type="InterPro" id="IPR003593">
    <property type="entry name" value="AAA+_ATPase"/>
</dbReference>
<dbReference type="InterPro" id="IPR003959">
    <property type="entry name" value="ATPase_AAA_core"/>
</dbReference>
<dbReference type="InterPro" id="IPR027417">
    <property type="entry name" value="P-loop_NTPase"/>
</dbReference>
<dbReference type="InterPro" id="IPR008543">
    <property type="entry name" value="Uncharacterised_Ycf2"/>
</dbReference>
<dbReference type="InterPro" id="IPR056777">
    <property type="entry name" value="Ycf2_N"/>
</dbReference>
<dbReference type="PANTHER" id="PTHR33078:SF51">
    <property type="entry name" value="PROTEIN TIC 214"/>
    <property type="match status" value="1"/>
</dbReference>
<dbReference type="PANTHER" id="PTHR33078">
    <property type="entry name" value="PROTEIN YCF2-RELATED"/>
    <property type="match status" value="1"/>
</dbReference>
<dbReference type="Pfam" id="PF00004">
    <property type="entry name" value="AAA"/>
    <property type="match status" value="1"/>
</dbReference>
<dbReference type="Pfam" id="PF05695">
    <property type="entry name" value="Ycf2"/>
    <property type="match status" value="1"/>
</dbReference>
<dbReference type="SMART" id="SM00382">
    <property type="entry name" value="AAA"/>
    <property type="match status" value="1"/>
</dbReference>
<dbReference type="SUPFAM" id="SSF52540">
    <property type="entry name" value="P-loop containing nucleoside triphosphate hydrolases"/>
    <property type="match status" value="1"/>
</dbReference>
<geneLocation type="chloroplast"/>
<proteinExistence type="inferred from homology"/>
<sequence>MRGHQFKSWILELREILREIKNSHHFLDSWTQFTSVGSFIHIFFHQERFLKLFDPRIWSILLSRNSQGSTSNRYFTIKGVILFVVAVLIYRINNRNMVERKNLYLIGLLPIPMNSIGPRNDTLEESVGSSNINRLIVSLLYLPKGKKISESCFLNPKESTWVLPITKKCSMPESNWGSRWWRNWIGKKRDSSCKISNETVAGIEILFKEKDLKYLEFLFVYYMDDPIRKDHDWELFDRLSLRKSRNRINLNSGPLFEILVKHWISYLMSAFREKIPIEVEGFFKQQGAGSTIQSNDIEHVSHLFSRNKWAISLQNCAQFHMWQFRQDLFVSWGKNPPESDFLRNVSRENWIWLDNVWLVNKDRFFSKVQNVSSNIQYDSTRSSFVQVTDSSQLKGSSDQSRDHLDSISNEDSEYHTLINQREIQQRKERSILWDPSFLQMERKEIESGRFPKCLSGYSSMSRLFTEREKQMINHLFPEEIEEFLGNPTRSVRSFFSDRWSELHLGSNPTERSTRDQKLLKKQQDLSFVPSRRSENKEMVNIFKIITYLQNTVSIHPISSDPGCDMVPKDEPDMDSSNKISFLNKNPFFDLFHLFHDRNRGGYTLHYDFESEERFQEMADLFTLSITEPDLVYHKGFAFSIDSCGLDQKQFLNEARDESKKKSLLVLPPIFYEENESFSRRIRKKWVRISCGNDLEDPKPKIVVFASNNIMEAVTQYRLIRNLIQIQYSTYGYIRNVLNRFFLMNRSDRNFEYGIQRDQIGKDTLNHRTIMKYTINQYLSNLKKSQKKWFEPLILISRTERSMNRDPDAYRYKWSNGSKNFQEHLEQSVSEQKSRFQVVFDRLRINQYSIDWSEVIDKKDLSKPLRFFLSKPLRFFLSKSLLFLSKLLFFLSNSLPFFCVSFGNIPIHRSEIYIYELKGPNDQLCNQLLESIGLQIVHLKKLKPFLLDDHDTSQKSKFLINGGTISPFLFNKIPKWMIDSFHTRNNRRKSFDNPDSNFSMIFHDQDNWLNPVKPFHRSSLISSFYKANRLRFLNNPHHFCFYWNTRFPFSVEKARINNSYFTYGQFLNILFIRNKIFSLCVGKKKHAFWGRDTISPIESQVSNIFIPNDFPQSGDETYNLYKSFHFPSRSDPFVRRAIYSIADISGTPLTEGQIVNFERTYCQPLSDMNLSDSEGKNLHQYLNFNSNMGLIHTPCSEKDLSSEKRKKRSLCLKKCVEKGQMYRTFQRDSAFSTLSKWNLFQTYMPWFLTSTGYKYLNLIFLDTFSDLLPILSSSQKFVSIFPDIMHGSGISWRILQKKLCLPQWNLISEISEISSKCLHNLLLSEEMIHRNNESPLISTHLRSPNAREFLYSILFLLLVAGYLVRTHLLFVSRASSELQTEFEKVKSLMIPSSMIELRKLLDRYPTSEPNSFWLKNLFLVALEQLGDSLEEIRGSASGGNMLGPAYGVKSIRSKKKDWNINLIEIIDLIPNPINRITFSRNTRHLSHTSKEIYSLIRKRKNVNGDWIDDKIESWVANSDSIADEEREFLVQFSTLTTENRIDQILLSLTHSDHLSKNDSGYQMIEQPGAIYLRYLVDIHKKHLMNYEFNPSCLAERRIFLAHYQTITYSQTSCGENSFHFPSHGKPFSLRLALSPSRGILVIGSIGTGRSYLVKYLATNSYVPFITVFLNKFLDNKPKGFLLDEIDIDDSDDIDDSDNLDASDDIGRDLDTELELLTRMNGLTMDMMPEIDRFYITLQFELAKAMSPCIIWIPNIHDLDVNESNDLSLGLLVNHLSRDCERCSTRNILVIASTHIPQKVDPALIAPNKLNTCIKIRRLLIPQQRKHFFTLSYTRGFHLEKKMFHTNGFGSITMGSNARDLVALTNEVLSISITQKKSIIDTNTIRSALHRQTWDLRSQVRSVQDHGILFYQIGRAVAQNVLLSNCPIDPISIYMKKKSCNEGDSYLYKWYFELGTSMKRLTILLYLLSCSAGSVAQDLWSLSGPDEKNGITSYGLVENDSDLVHGLLEVEGALVGSSRTEKDCSQFDNDRVTLLLRPEPRNPLDMMQKGSCSILDQRFLYEKYESEFEEGEGEGALDPQEDLFNHIVWAPRIWRPWGFLFDCIERPNELGFPYWSRSFRGKRIIYDEEDELQENDSGFLQSGTMQYQTRDRSSKEQGLFRISQFIWDPADPLFFLFKDQPPGSVFSHRELFADEEMSKGLLTSQTDPPTSIYKRWFIKNTQEKHFELLINRQRWLRTNSSLSNGSFRSNTLSESYQYLSNLFLSNGTLLDQMTKTLLRKRWLFPDEMKIGFM</sequence>
<keyword id="KW-0067">ATP-binding</keyword>
<keyword id="KW-0150">Chloroplast</keyword>
<keyword id="KW-0547">Nucleotide-binding</keyword>
<keyword id="KW-0934">Plastid</keyword>
<protein>
    <recommendedName>
        <fullName>Protein Ycf2 A</fullName>
    </recommendedName>
</protein>
<accession>Q8S8V2</accession>
<feature type="chain" id="PRO_0000223050" description="Protein Ycf2 A">
    <location>
        <begin position="1"/>
        <end position="2291"/>
    </location>
</feature>
<feature type="binding site" evidence="2">
    <location>
        <begin position="1642"/>
        <end position="1649"/>
    </location>
    <ligand>
        <name>ATP</name>
        <dbReference type="ChEBI" id="CHEBI:30616"/>
    </ligand>
</feature>
<gene>
    <name type="primary">ycf2-A</name>
</gene>
<name>YCF2A_ATRBE</name>